<proteinExistence type="inferred from homology"/>
<geneLocation type="mitochondrion"/>
<feature type="chain" id="PRO_0000061437" description="Cytochrome b">
    <location>
        <begin position="1"/>
        <end position="379"/>
    </location>
</feature>
<feature type="transmembrane region" description="Helical" evidence="2">
    <location>
        <begin position="33"/>
        <end position="53"/>
    </location>
</feature>
<feature type="transmembrane region" description="Helical" evidence="2">
    <location>
        <begin position="77"/>
        <end position="98"/>
    </location>
</feature>
<feature type="transmembrane region" description="Helical" evidence="2">
    <location>
        <begin position="113"/>
        <end position="133"/>
    </location>
</feature>
<feature type="transmembrane region" description="Helical" evidence="2">
    <location>
        <begin position="178"/>
        <end position="198"/>
    </location>
</feature>
<feature type="transmembrane region" description="Helical" evidence="2">
    <location>
        <begin position="226"/>
        <end position="246"/>
    </location>
</feature>
<feature type="transmembrane region" description="Helical" evidence="2">
    <location>
        <begin position="288"/>
        <end position="308"/>
    </location>
</feature>
<feature type="transmembrane region" description="Helical" evidence="2">
    <location>
        <begin position="320"/>
        <end position="340"/>
    </location>
</feature>
<feature type="transmembrane region" description="Helical" evidence="2">
    <location>
        <begin position="347"/>
        <end position="367"/>
    </location>
</feature>
<feature type="binding site" description="axial binding residue" evidence="2">
    <location>
        <position position="83"/>
    </location>
    <ligand>
        <name>heme b</name>
        <dbReference type="ChEBI" id="CHEBI:60344"/>
        <label>b562</label>
    </ligand>
    <ligandPart>
        <name>Fe</name>
        <dbReference type="ChEBI" id="CHEBI:18248"/>
    </ligandPart>
</feature>
<feature type="binding site" description="axial binding residue" evidence="2">
    <location>
        <position position="97"/>
    </location>
    <ligand>
        <name>heme b</name>
        <dbReference type="ChEBI" id="CHEBI:60344"/>
        <label>b566</label>
    </ligand>
    <ligandPart>
        <name>Fe</name>
        <dbReference type="ChEBI" id="CHEBI:18248"/>
    </ligandPart>
</feature>
<feature type="binding site" description="axial binding residue" evidence="2">
    <location>
        <position position="182"/>
    </location>
    <ligand>
        <name>heme b</name>
        <dbReference type="ChEBI" id="CHEBI:60344"/>
        <label>b562</label>
    </ligand>
    <ligandPart>
        <name>Fe</name>
        <dbReference type="ChEBI" id="CHEBI:18248"/>
    </ligandPart>
</feature>
<feature type="binding site" description="axial binding residue" evidence="2">
    <location>
        <position position="196"/>
    </location>
    <ligand>
        <name>heme b</name>
        <dbReference type="ChEBI" id="CHEBI:60344"/>
        <label>b566</label>
    </ligand>
    <ligandPart>
        <name>Fe</name>
        <dbReference type="ChEBI" id="CHEBI:18248"/>
    </ligandPart>
</feature>
<feature type="binding site" evidence="2">
    <location>
        <position position="201"/>
    </location>
    <ligand>
        <name>a ubiquinone</name>
        <dbReference type="ChEBI" id="CHEBI:16389"/>
    </ligand>
</feature>
<organism>
    <name type="scientific">Pronolagus crassicaudatus</name>
    <name type="common">Natal red rock hare</name>
    <dbReference type="NCBI Taxonomy" id="42059"/>
    <lineage>
        <taxon>Eukaryota</taxon>
        <taxon>Metazoa</taxon>
        <taxon>Chordata</taxon>
        <taxon>Craniata</taxon>
        <taxon>Vertebrata</taxon>
        <taxon>Euteleostomi</taxon>
        <taxon>Mammalia</taxon>
        <taxon>Eutheria</taxon>
        <taxon>Euarchontoglires</taxon>
        <taxon>Glires</taxon>
        <taxon>Lagomorpha</taxon>
        <taxon>Leporidae</taxon>
        <taxon>Pronolagus</taxon>
    </lineage>
</organism>
<keyword id="KW-0249">Electron transport</keyword>
<keyword id="KW-0349">Heme</keyword>
<keyword id="KW-0408">Iron</keyword>
<keyword id="KW-0472">Membrane</keyword>
<keyword id="KW-0479">Metal-binding</keyword>
<keyword id="KW-0496">Mitochondrion</keyword>
<keyword id="KW-0999">Mitochondrion inner membrane</keyword>
<keyword id="KW-0679">Respiratory chain</keyword>
<keyword id="KW-0812">Transmembrane</keyword>
<keyword id="KW-1133">Transmembrane helix</keyword>
<keyword id="KW-0813">Transport</keyword>
<keyword id="KW-0830">Ubiquinone</keyword>
<accession>Q6ELU6</accession>
<sequence>MTNIRKIHPLFKILNHSLIDLPTPSNISAWWNFGSLLGLCLAIQIFTGLFLAMHYTSDTMTAFSSVTHICRDVNYGWLIRYLHANGASMFFICLYLHVGRGIYYGSYTYSETWNIGILLLFAVMATAFMGYVLPWGQMSFWGATVITNLLSAIPYIGTNLVEWIWGGFSVDKATLTRFFAFHFILPFIIAALATTHLLFLHETGSNNPSGIPSDSDKIPFHPYYTIKDTLGFLMLILLLLLLTLFTPDLLGDPDNYSPANPLNTPPHIKPEWYFLFAYAILRSIPNKLGGVLALIMSILILAIMPFLHTSKQRSMMFRPISQIMFWTLVADLMVLTWIGGQPVEYPFTIIGQVASILYFTIILIFMPLASLIENKILKW</sequence>
<protein>
    <recommendedName>
        <fullName>Cytochrome b</fullName>
    </recommendedName>
    <alternativeName>
        <fullName>Complex III subunit 3</fullName>
    </alternativeName>
    <alternativeName>
        <fullName>Complex III subunit III</fullName>
    </alternativeName>
    <alternativeName>
        <fullName>Cytochrome b-c1 complex subunit 3</fullName>
    </alternativeName>
    <alternativeName>
        <fullName>Ubiquinol-cytochrome-c reductase complex cytochrome b subunit</fullName>
    </alternativeName>
</protein>
<gene>
    <name type="primary">MT-CYB</name>
    <name type="synonym">COB</name>
    <name type="synonym">CYTB</name>
    <name type="synonym">MTCYB</name>
</gene>
<name>CYB_PROCS</name>
<dbReference type="EMBL" id="AY292738">
    <property type="protein sequence ID" value="AAS54934.1"/>
    <property type="molecule type" value="Genomic_DNA"/>
</dbReference>
<dbReference type="SMR" id="Q6ELU6"/>
<dbReference type="GO" id="GO:0005743">
    <property type="term" value="C:mitochondrial inner membrane"/>
    <property type="evidence" value="ECO:0007669"/>
    <property type="project" value="UniProtKB-SubCell"/>
</dbReference>
<dbReference type="GO" id="GO:0045275">
    <property type="term" value="C:respiratory chain complex III"/>
    <property type="evidence" value="ECO:0007669"/>
    <property type="project" value="InterPro"/>
</dbReference>
<dbReference type="GO" id="GO:0046872">
    <property type="term" value="F:metal ion binding"/>
    <property type="evidence" value="ECO:0007669"/>
    <property type="project" value="UniProtKB-KW"/>
</dbReference>
<dbReference type="GO" id="GO:0008121">
    <property type="term" value="F:ubiquinol-cytochrome-c reductase activity"/>
    <property type="evidence" value="ECO:0007669"/>
    <property type="project" value="InterPro"/>
</dbReference>
<dbReference type="GO" id="GO:0006122">
    <property type="term" value="P:mitochondrial electron transport, ubiquinol to cytochrome c"/>
    <property type="evidence" value="ECO:0007669"/>
    <property type="project" value="TreeGrafter"/>
</dbReference>
<dbReference type="CDD" id="cd00290">
    <property type="entry name" value="cytochrome_b_C"/>
    <property type="match status" value="1"/>
</dbReference>
<dbReference type="CDD" id="cd00284">
    <property type="entry name" value="Cytochrome_b_N"/>
    <property type="match status" value="1"/>
</dbReference>
<dbReference type="FunFam" id="1.20.810.10:FF:000002">
    <property type="entry name" value="Cytochrome b"/>
    <property type="match status" value="1"/>
</dbReference>
<dbReference type="Gene3D" id="1.20.810.10">
    <property type="entry name" value="Cytochrome Bc1 Complex, Chain C"/>
    <property type="match status" value="1"/>
</dbReference>
<dbReference type="InterPro" id="IPR005798">
    <property type="entry name" value="Cyt_b/b6_C"/>
</dbReference>
<dbReference type="InterPro" id="IPR036150">
    <property type="entry name" value="Cyt_b/b6_C_sf"/>
</dbReference>
<dbReference type="InterPro" id="IPR005797">
    <property type="entry name" value="Cyt_b/b6_N"/>
</dbReference>
<dbReference type="InterPro" id="IPR027387">
    <property type="entry name" value="Cytb/b6-like_sf"/>
</dbReference>
<dbReference type="InterPro" id="IPR030689">
    <property type="entry name" value="Cytochrome_b"/>
</dbReference>
<dbReference type="InterPro" id="IPR048260">
    <property type="entry name" value="Cytochrome_b_C_euk/bac"/>
</dbReference>
<dbReference type="InterPro" id="IPR048259">
    <property type="entry name" value="Cytochrome_b_N_euk/bac"/>
</dbReference>
<dbReference type="InterPro" id="IPR016174">
    <property type="entry name" value="Di-haem_cyt_TM"/>
</dbReference>
<dbReference type="PANTHER" id="PTHR19271">
    <property type="entry name" value="CYTOCHROME B"/>
    <property type="match status" value="1"/>
</dbReference>
<dbReference type="PANTHER" id="PTHR19271:SF16">
    <property type="entry name" value="CYTOCHROME B"/>
    <property type="match status" value="1"/>
</dbReference>
<dbReference type="Pfam" id="PF00032">
    <property type="entry name" value="Cytochrom_B_C"/>
    <property type="match status" value="1"/>
</dbReference>
<dbReference type="Pfam" id="PF00033">
    <property type="entry name" value="Cytochrome_B"/>
    <property type="match status" value="1"/>
</dbReference>
<dbReference type="PIRSF" id="PIRSF038885">
    <property type="entry name" value="COB"/>
    <property type="match status" value="1"/>
</dbReference>
<dbReference type="SUPFAM" id="SSF81648">
    <property type="entry name" value="a domain/subunit of cytochrome bc1 complex (Ubiquinol-cytochrome c reductase)"/>
    <property type="match status" value="1"/>
</dbReference>
<dbReference type="SUPFAM" id="SSF81342">
    <property type="entry name" value="Transmembrane di-heme cytochromes"/>
    <property type="match status" value="1"/>
</dbReference>
<dbReference type="PROSITE" id="PS51003">
    <property type="entry name" value="CYTB_CTER"/>
    <property type="match status" value="1"/>
</dbReference>
<dbReference type="PROSITE" id="PS51002">
    <property type="entry name" value="CYTB_NTER"/>
    <property type="match status" value="1"/>
</dbReference>
<comment type="function">
    <text evidence="2">Component of the ubiquinol-cytochrome c reductase complex (complex III or cytochrome b-c1 complex) that is part of the mitochondrial respiratory chain. The b-c1 complex mediates electron transfer from ubiquinol to cytochrome c. Contributes to the generation of a proton gradient across the mitochondrial membrane that is then used for ATP synthesis.</text>
</comment>
<comment type="cofactor">
    <cofactor evidence="2">
        <name>heme b</name>
        <dbReference type="ChEBI" id="CHEBI:60344"/>
    </cofactor>
    <text evidence="2">Binds 2 heme b groups non-covalently.</text>
</comment>
<comment type="subunit">
    <text evidence="2">The cytochrome bc1 complex contains 11 subunits: 3 respiratory subunits (MT-CYB, CYC1 and UQCRFS1), 2 core proteins (UQCRC1 and UQCRC2) and 6 low-molecular weight proteins (UQCRH/QCR6, UQCRB/QCR7, UQCRQ/QCR8, UQCR10/QCR9, UQCR11/QCR10 and a cleavage product of UQCRFS1). This cytochrome bc1 complex then forms a dimer.</text>
</comment>
<comment type="subcellular location">
    <subcellularLocation>
        <location evidence="2">Mitochondrion inner membrane</location>
        <topology evidence="2">Multi-pass membrane protein</topology>
    </subcellularLocation>
</comment>
<comment type="miscellaneous">
    <text evidence="1">Heme 1 (or BL or b562) is low-potential and absorbs at about 562 nm, and heme 2 (or BH or b566) is high-potential and absorbs at about 566 nm.</text>
</comment>
<comment type="similarity">
    <text evidence="3 4">Belongs to the cytochrome b family.</text>
</comment>
<comment type="caution">
    <text evidence="2">The full-length protein contains only eight transmembrane helices, not nine as predicted by bioinformatics tools.</text>
</comment>
<evidence type="ECO:0000250" key="1"/>
<evidence type="ECO:0000250" key="2">
    <source>
        <dbReference type="UniProtKB" id="P00157"/>
    </source>
</evidence>
<evidence type="ECO:0000255" key="3">
    <source>
        <dbReference type="PROSITE-ProRule" id="PRU00967"/>
    </source>
</evidence>
<evidence type="ECO:0000255" key="4">
    <source>
        <dbReference type="PROSITE-ProRule" id="PRU00968"/>
    </source>
</evidence>
<reference key="1">
    <citation type="journal article" date="2004" name="Syst. Biol.">
        <title>A molecular supermatrix of the rabbits and hares (Leporidae) allows for the identification of five intercontinental exchanges during the Miocene.</title>
        <authorList>
            <person name="Matthee C.A."/>
            <person name="van Vuuren B.J."/>
            <person name="Bell D."/>
            <person name="Robinson T.J."/>
        </authorList>
    </citation>
    <scope>NUCLEOTIDE SEQUENCE [GENOMIC DNA]</scope>
</reference>